<proteinExistence type="inferred from homology"/>
<name>PGK_MICAN</name>
<reference key="1">
    <citation type="journal article" date="2007" name="DNA Res.">
        <title>Complete genomic structure of the bloom-forming toxic cyanobacterium Microcystis aeruginosa NIES-843.</title>
        <authorList>
            <person name="Kaneko T."/>
            <person name="Nakajima N."/>
            <person name="Okamoto S."/>
            <person name="Suzuki I."/>
            <person name="Tanabe Y."/>
            <person name="Tamaoki M."/>
            <person name="Nakamura Y."/>
            <person name="Kasai F."/>
            <person name="Watanabe A."/>
            <person name="Kawashima K."/>
            <person name="Kishida Y."/>
            <person name="Ono A."/>
            <person name="Shimizu Y."/>
            <person name="Takahashi C."/>
            <person name="Minami C."/>
            <person name="Fujishiro T."/>
            <person name="Kohara M."/>
            <person name="Katoh M."/>
            <person name="Nakazaki N."/>
            <person name="Nakayama S."/>
            <person name="Yamada M."/>
            <person name="Tabata S."/>
            <person name="Watanabe M.M."/>
        </authorList>
    </citation>
    <scope>NUCLEOTIDE SEQUENCE [LARGE SCALE GENOMIC DNA]</scope>
    <source>
        <strain>NIES-843 / IAM M-247</strain>
    </source>
</reference>
<dbReference type="EC" id="2.7.2.3" evidence="1"/>
<dbReference type="EMBL" id="AP009552">
    <property type="protein sequence ID" value="BAG04189.1"/>
    <property type="molecule type" value="Genomic_DNA"/>
</dbReference>
<dbReference type="RefSeq" id="WP_002757146.1">
    <property type="nucleotide sequence ID" value="NC_010296.1"/>
</dbReference>
<dbReference type="SMR" id="B0JT86"/>
<dbReference type="STRING" id="449447.MAE_43670"/>
<dbReference type="PaxDb" id="449447-MAE_43670"/>
<dbReference type="EnsemblBacteria" id="BAG04189">
    <property type="protein sequence ID" value="BAG04189"/>
    <property type="gene ID" value="MAE_43670"/>
</dbReference>
<dbReference type="KEGG" id="mar:MAE_43670"/>
<dbReference type="eggNOG" id="COG0126">
    <property type="taxonomic scope" value="Bacteria"/>
</dbReference>
<dbReference type="HOGENOM" id="CLU_025427_0_1_3"/>
<dbReference type="BioCyc" id="MAER449447:MAE_RS18950-MONOMER"/>
<dbReference type="UniPathway" id="UPA00109">
    <property type="reaction ID" value="UER00185"/>
</dbReference>
<dbReference type="Proteomes" id="UP000001510">
    <property type="component" value="Chromosome"/>
</dbReference>
<dbReference type="GO" id="GO:0005829">
    <property type="term" value="C:cytosol"/>
    <property type="evidence" value="ECO:0007669"/>
    <property type="project" value="TreeGrafter"/>
</dbReference>
<dbReference type="GO" id="GO:0043531">
    <property type="term" value="F:ADP binding"/>
    <property type="evidence" value="ECO:0007669"/>
    <property type="project" value="TreeGrafter"/>
</dbReference>
<dbReference type="GO" id="GO:0005524">
    <property type="term" value="F:ATP binding"/>
    <property type="evidence" value="ECO:0007669"/>
    <property type="project" value="UniProtKB-KW"/>
</dbReference>
<dbReference type="GO" id="GO:0004618">
    <property type="term" value="F:phosphoglycerate kinase activity"/>
    <property type="evidence" value="ECO:0007669"/>
    <property type="project" value="UniProtKB-UniRule"/>
</dbReference>
<dbReference type="GO" id="GO:0006094">
    <property type="term" value="P:gluconeogenesis"/>
    <property type="evidence" value="ECO:0007669"/>
    <property type="project" value="TreeGrafter"/>
</dbReference>
<dbReference type="GO" id="GO:0006096">
    <property type="term" value="P:glycolytic process"/>
    <property type="evidence" value="ECO:0007669"/>
    <property type="project" value="UniProtKB-UniRule"/>
</dbReference>
<dbReference type="CDD" id="cd00318">
    <property type="entry name" value="Phosphoglycerate_kinase"/>
    <property type="match status" value="1"/>
</dbReference>
<dbReference type="FunFam" id="3.40.50.1260:FF:000003">
    <property type="entry name" value="Phosphoglycerate kinase"/>
    <property type="match status" value="1"/>
</dbReference>
<dbReference type="FunFam" id="3.40.50.1260:FF:000006">
    <property type="entry name" value="Phosphoglycerate kinase"/>
    <property type="match status" value="1"/>
</dbReference>
<dbReference type="Gene3D" id="3.40.50.1260">
    <property type="entry name" value="Phosphoglycerate kinase, N-terminal domain"/>
    <property type="match status" value="2"/>
</dbReference>
<dbReference type="HAMAP" id="MF_00145">
    <property type="entry name" value="Phosphoglyc_kinase"/>
    <property type="match status" value="1"/>
</dbReference>
<dbReference type="InterPro" id="IPR001576">
    <property type="entry name" value="Phosphoglycerate_kinase"/>
</dbReference>
<dbReference type="InterPro" id="IPR015911">
    <property type="entry name" value="Phosphoglycerate_kinase_CS"/>
</dbReference>
<dbReference type="InterPro" id="IPR015824">
    <property type="entry name" value="Phosphoglycerate_kinase_N"/>
</dbReference>
<dbReference type="InterPro" id="IPR036043">
    <property type="entry name" value="Phosphoglycerate_kinase_sf"/>
</dbReference>
<dbReference type="PANTHER" id="PTHR11406">
    <property type="entry name" value="PHOSPHOGLYCERATE KINASE"/>
    <property type="match status" value="1"/>
</dbReference>
<dbReference type="PANTHER" id="PTHR11406:SF23">
    <property type="entry name" value="PHOSPHOGLYCERATE KINASE 1, CHLOROPLASTIC-RELATED"/>
    <property type="match status" value="1"/>
</dbReference>
<dbReference type="Pfam" id="PF00162">
    <property type="entry name" value="PGK"/>
    <property type="match status" value="1"/>
</dbReference>
<dbReference type="PIRSF" id="PIRSF000724">
    <property type="entry name" value="Pgk"/>
    <property type="match status" value="1"/>
</dbReference>
<dbReference type="PRINTS" id="PR00477">
    <property type="entry name" value="PHGLYCKINASE"/>
</dbReference>
<dbReference type="SUPFAM" id="SSF53748">
    <property type="entry name" value="Phosphoglycerate kinase"/>
    <property type="match status" value="1"/>
</dbReference>
<dbReference type="PROSITE" id="PS00111">
    <property type="entry name" value="PGLYCERATE_KINASE"/>
    <property type="match status" value="1"/>
</dbReference>
<feature type="chain" id="PRO_1000076593" description="Phosphoglycerate kinase">
    <location>
        <begin position="1"/>
        <end position="402"/>
    </location>
</feature>
<feature type="binding site" evidence="1">
    <location>
        <begin position="24"/>
        <end position="26"/>
    </location>
    <ligand>
        <name>substrate</name>
    </ligand>
</feature>
<feature type="binding site" evidence="1">
    <location>
        <position position="41"/>
    </location>
    <ligand>
        <name>substrate</name>
    </ligand>
</feature>
<feature type="binding site" evidence="1">
    <location>
        <begin position="64"/>
        <end position="67"/>
    </location>
    <ligand>
        <name>substrate</name>
    </ligand>
</feature>
<feature type="binding site" evidence="1">
    <location>
        <position position="123"/>
    </location>
    <ligand>
        <name>substrate</name>
    </ligand>
</feature>
<feature type="binding site" evidence="1">
    <location>
        <position position="156"/>
    </location>
    <ligand>
        <name>substrate</name>
    </ligand>
</feature>
<feature type="binding site" evidence="1">
    <location>
        <position position="207"/>
    </location>
    <ligand>
        <name>ATP</name>
        <dbReference type="ChEBI" id="CHEBI:30616"/>
    </ligand>
</feature>
<feature type="binding site" evidence="1">
    <location>
        <position position="298"/>
    </location>
    <ligand>
        <name>ATP</name>
        <dbReference type="ChEBI" id="CHEBI:30616"/>
    </ligand>
</feature>
<feature type="binding site" evidence="1">
    <location>
        <position position="329"/>
    </location>
    <ligand>
        <name>ATP</name>
        <dbReference type="ChEBI" id="CHEBI:30616"/>
    </ligand>
</feature>
<feature type="binding site" evidence="1">
    <location>
        <begin position="358"/>
        <end position="361"/>
    </location>
    <ligand>
        <name>ATP</name>
        <dbReference type="ChEBI" id="CHEBI:30616"/>
    </ligand>
</feature>
<keyword id="KW-0067">ATP-binding</keyword>
<keyword id="KW-0963">Cytoplasm</keyword>
<keyword id="KW-0324">Glycolysis</keyword>
<keyword id="KW-0418">Kinase</keyword>
<keyword id="KW-0547">Nucleotide-binding</keyword>
<keyword id="KW-0808">Transferase</keyword>
<gene>
    <name evidence="1" type="primary">pgk</name>
    <name type="ordered locus">MAE_43670</name>
</gene>
<sequence length="402" mass="42640">MPKKTVANLTEADLAGKRVLVRVDFNVPMDKATGAISDDTRIRAALPTIEDLIKKGAKVILCSHMGRPDGQVKENLRLTPVAKRLSELLGQEVIMCPDCIGEGVTAAISQMSNGQVALLENLRFHGEEEANDPDFAKKLAANADLYVNDAFGTAHRAHASTEGVTHYLSPSVAGYLIEKELNYLQAAIETPQRPLAAIIGGSKVSSKIGVIETLLEKCDKLLIGGGMIFTFYKARGLSVGKSLVEEDKLELAKSLEAKAKEKGVEFLLPTDVVLADKFDKDAESQIVKVENIPDGWMGLDIGPESVKVFQEALSNCKSVLWNGPMGVFEFDKFAAGTDAIAHTLADLTATGTTTIIGGGDSVAAVEKVGVAEKMSHISTGGGASLELLEGKVLPGIAALDEA</sequence>
<organism>
    <name type="scientific">Microcystis aeruginosa (strain NIES-843 / IAM M-2473)</name>
    <dbReference type="NCBI Taxonomy" id="449447"/>
    <lineage>
        <taxon>Bacteria</taxon>
        <taxon>Bacillati</taxon>
        <taxon>Cyanobacteriota</taxon>
        <taxon>Cyanophyceae</taxon>
        <taxon>Oscillatoriophycideae</taxon>
        <taxon>Chroococcales</taxon>
        <taxon>Microcystaceae</taxon>
        <taxon>Microcystis</taxon>
    </lineage>
</organism>
<protein>
    <recommendedName>
        <fullName evidence="1">Phosphoglycerate kinase</fullName>
        <ecNumber evidence="1">2.7.2.3</ecNumber>
    </recommendedName>
</protein>
<comment type="catalytic activity">
    <reaction evidence="1">
        <text>(2R)-3-phosphoglycerate + ATP = (2R)-3-phospho-glyceroyl phosphate + ADP</text>
        <dbReference type="Rhea" id="RHEA:14801"/>
        <dbReference type="ChEBI" id="CHEBI:30616"/>
        <dbReference type="ChEBI" id="CHEBI:57604"/>
        <dbReference type="ChEBI" id="CHEBI:58272"/>
        <dbReference type="ChEBI" id="CHEBI:456216"/>
        <dbReference type="EC" id="2.7.2.3"/>
    </reaction>
</comment>
<comment type="pathway">
    <text evidence="1">Carbohydrate degradation; glycolysis; pyruvate from D-glyceraldehyde 3-phosphate: step 2/5.</text>
</comment>
<comment type="subunit">
    <text evidence="1">Monomer.</text>
</comment>
<comment type="subcellular location">
    <subcellularLocation>
        <location evidence="1">Cytoplasm</location>
    </subcellularLocation>
</comment>
<comment type="similarity">
    <text evidence="1">Belongs to the phosphoglycerate kinase family.</text>
</comment>
<evidence type="ECO:0000255" key="1">
    <source>
        <dbReference type="HAMAP-Rule" id="MF_00145"/>
    </source>
</evidence>
<accession>B0JT86</accession>